<keyword id="KW-0056">Arginine metabolism</keyword>
<keyword id="KW-0963">Cytoplasm</keyword>
<keyword id="KW-0378">Hydrolase</keyword>
<proteinExistence type="inferred from homology"/>
<protein>
    <recommendedName>
        <fullName evidence="1">Arginine deiminase</fullName>
        <shortName evidence="1">ADI</shortName>
        <ecNumber evidence="1">3.5.3.6</ecNumber>
    </recommendedName>
    <alternativeName>
        <fullName evidence="1">Arginine dihydrolase</fullName>
        <shortName evidence="1">AD</shortName>
    </alternativeName>
</protein>
<reference key="1">
    <citation type="journal article" date="2004" name="Science">
        <title>The complete genome sequence of Propionibacterium acnes, a commensal of human skin.</title>
        <authorList>
            <person name="Brueggemann H."/>
            <person name="Henne A."/>
            <person name="Hoster F."/>
            <person name="Liesegang H."/>
            <person name="Wiezer A."/>
            <person name="Strittmatter A."/>
            <person name="Hujer S."/>
            <person name="Duerre P."/>
            <person name="Gottschalk G."/>
        </authorList>
    </citation>
    <scope>NUCLEOTIDE SEQUENCE [LARGE SCALE GENOMIC DNA]</scope>
    <source>
        <strain>DSM 16379 / KPA171202</strain>
    </source>
</reference>
<sequence length="414" mass="45754">MTTPIGAWSEVGKLREVMVCEPRLAHRRLTPSNCRELLFDDVLWVEKAQEDHRDFVAKMRERGIVVHEMHQLLSEVLDISEGRSWVLDRKLSPNAVGLGVDEDVRDWLNDMPSDTLAEYLIGGVAYGEVPADRRKHVLGALIKAHSENEFLIPPLPNTQFTRDTTAWIFGGVTFNPMRWPARQQETVLASAIYTHHPIFAERDFKIWYGCAEADHGMSTLEGGDIMPVGNGTVLIGMGERSSWQAITQVARSLFAQNAARRMVVAAMAPDRASMHLDTVFSFCDVDLVTLYKPVVDTITPLVLEPSSEAAGFSVRVDDRHFTDVVASSLGLDGLRTVETGGDCWEAQREQWDDGNNVVALEPGVVVGYDRNTATNALLAKAGVEVVEIKAAELGRGRGGGHCMTCPITRDPVDY</sequence>
<accession>Q6AA78</accession>
<organism>
    <name type="scientific">Cutibacterium acnes (strain DSM 16379 / KPA171202)</name>
    <name type="common">Propionibacterium acnes</name>
    <dbReference type="NCBI Taxonomy" id="267747"/>
    <lineage>
        <taxon>Bacteria</taxon>
        <taxon>Bacillati</taxon>
        <taxon>Actinomycetota</taxon>
        <taxon>Actinomycetes</taxon>
        <taxon>Propionibacteriales</taxon>
        <taxon>Propionibacteriaceae</taxon>
        <taxon>Cutibacterium</taxon>
    </lineage>
</organism>
<feature type="chain" id="PRO_0000182224" description="Arginine deiminase">
    <location>
        <begin position="1"/>
        <end position="414"/>
    </location>
</feature>
<feature type="active site" description="Amidino-cysteine intermediate" evidence="1">
    <location>
        <position position="402"/>
    </location>
</feature>
<evidence type="ECO:0000255" key="1">
    <source>
        <dbReference type="HAMAP-Rule" id="MF_00242"/>
    </source>
</evidence>
<dbReference type="EC" id="3.5.3.6" evidence="1"/>
<dbReference type="EMBL" id="AE017283">
    <property type="protein sequence ID" value="AAT82338.1"/>
    <property type="molecule type" value="Genomic_DNA"/>
</dbReference>
<dbReference type="RefSeq" id="WP_002515158.1">
    <property type="nucleotide sequence ID" value="NZ_CP025935.1"/>
</dbReference>
<dbReference type="SMR" id="Q6AA78"/>
<dbReference type="EnsemblBacteria" id="AAT82338">
    <property type="protein sequence ID" value="AAT82338"/>
    <property type="gene ID" value="PPA0583"/>
</dbReference>
<dbReference type="KEGG" id="pac:PPA0583"/>
<dbReference type="PATRIC" id="fig|267747.3.peg.611"/>
<dbReference type="eggNOG" id="COG2235">
    <property type="taxonomic scope" value="Bacteria"/>
</dbReference>
<dbReference type="HOGENOM" id="CLU_052662_0_0_11"/>
<dbReference type="UniPathway" id="UPA00254">
    <property type="reaction ID" value="UER00364"/>
</dbReference>
<dbReference type="Proteomes" id="UP000000603">
    <property type="component" value="Chromosome"/>
</dbReference>
<dbReference type="GO" id="GO:0005737">
    <property type="term" value="C:cytoplasm"/>
    <property type="evidence" value="ECO:0007669"/>
    <property type="project" value="UniProtKB-SubCell"/>
</dbReference>
<dbReference type="GO" id="GO:0016990">
    <property type="term" value="F:arginine deiminase activity"/>
    <property type="evidence" value="ECO:0007669"/>
    <property type="project" value="UniProtKB-UniRule"/>
</dbReference>
<dbReference type="GO" id="GO:0019547">
    <property type="term" value="P:arginine catabolic process to ornithine"/>
    <property type="evidence" value="ECO:0007669"/>
    <property type="project" value="UniProtKB-UniRule"/>
</dbReference>
<dbReference type="GO" id="GO:0019546">
    <property type="term" value="P:arginine deiminase pathway"/>
    <property type="evidence" value="ECO:0007669"/>
    <property type="project" value="TreeGrafter"/>
</dbReference>
<dbReference type="Gene3D" id="1.10.3930.10">
    <property type="entry name" value="Arginine deiminase"/>
    <property type="match status" value="1"/>
</dbReference>
<dbReference type="Gene3D" id="3.75.10.10">
    <property type="entry name" value="L-arginine/glycine Amidinotransferase, Chain A"/>
    <property type="match status" value="1"/>
</dbReference>
<dbReference type="HAMAP" id="MF_00242">
    <property type="entry name" value="Arg_deiminase"/>
    <property type="match status" value="1"/>
</dbReference>
<dbReference type="InterPro" id="IPR003876">
    <property type="entry name" value="Arg_deiminase"/>
</dbReference>
<dbReference type="NCBIfam" id="NF002381">
    <property type="entry name" value="PRK01388.1"/>
    <property type="match status" value="1"/>
</dbReference>
<dbReference type="PANTHER" id="PTHR47271">
    <property type="entry name" value="ARGININE DEIMINASE"/>
    <property type="match status" value="1"/>
</dbReference>
<dbReference type="PANTHER" id="PTHR47271:SF3">
    <property type="entry name" value="ARGININE DEIMINASE"/>
    <property type="match status" value="1"/>
</dbReference>
<dbReference type="Pfam" id="PF02274">
    <property type="entry name" value="ADI"/>
    <property type="match status" value="1"/>
</dbReference>
<dbReference type="PIRSF" id="PIRSF006356">
    <property type="entry name" value="Arg_deiminase"/>
    <property type="match status" value="1"/>
</dbReference>
<dbReference type="PRINTS" id="PR01466">
    <property type="entry name" value="ARGDEIMINASE"/>
</dbReference>
<dbReference type="SUPFAM" id="SSF55909">
    <property type="entry name" value="Pentein"/>
    <property type="match status" value="1"/>
</dbReference>
<name>ARCA_CUTAK</name>
<gene>
    <name evidence="1" type="primary">arcA</name>
    <name type="ordered locus">PPA0583</name>
</gene>
<comment type="catalytic activity">
    <reaction evidence="1">
        <text>L-arginine + H2O = L-citrulline + NH4(+)</text>
        <dbReference type="Rhea" id="RHEA:19597"/>
        <dbReference type="ChEBI" id="CHEBI:15377"/>
        <dbReference type="ChEBI" id="CHEBI:28938"/>
        <dbReference type="ChEBI" id="CHEBI:32682"/>
        <dbReference type="ChEBI" id="CHEBI:57743"/>
        <dbReference type="EC" id="3.5.3.6"/>
    </reaction>
</comment>
<comment type="pathway">
    <text evidence="1">Amino-acid degradation; L-arginine degradation via ADI pathway; carbamoyl phosphate from L-arginine: step 1/2.</text>
</comment>
<comment type="subcellular location">
    <subcellularLocation>
        <location evidence="1">Cytoplasm</location>
    </subcellularLocation>
</comment>
<comment type="similarity">
    <text evidence="1">Belongs to the arginine deiminase family.</text>
</comment>